<feature type="chain" id="PRO_1000204774" description="Nucleoid-associated protein GWCH70_0020">
    <location>
        <begin position="1"/>
        <end position="108"/>
    </location>
</feature>
<feature type="region of interest" description="Disordered" evidence="2">
    <location>
        <begin position="1"/>
        <end position="34"/>
    </location>
</feature>
<feature type="compositionally biased region" description="Low complexity" evidence="2">
    <location>
        <begin position="9"/>
        <end position="18"/>
    </location>
</feature>
<feature type="compositionally biased region" description="Basic and acidic residues" evidence="2">
    <location>
        <begin position="19"/>
        <end position="34"/>
    </location>
</feature>
<comment type="function">
    <text evidence="1">Binds to DNA and alters its conformation. May be involved in regulation of gene expression, nucleoid organization and DNA protection.</text>
</comment>
<comment type="subunit">
    <text evidence="1">Homodimer.</text>
</comment>
<comment type="subcellular location">
    <subcellularLocation>
        <location evidence="1">Cytoplasm</location>
        <location evidence="1">Nucleoid</location>
    </subcellularLocation>
</comment>
<comment type="similarity">
    <text evidence="1">Belongs to the YbaB/EbfC family.</text>
</comment>
<keyword id="KW-0963">Cytoplasm</keyword>
<keyword id="KW-0238">DNA-binding</keyword>
<evidence type="ECO:0000255" key="1">
    <source>
        <dbReference type="HAMAP-Rule" id="MF_00274"/>
    </source>
</evidence>
<evidence type="ECO:0000256" key="2">
    <source>
        <dbReference type="SAM" id="MobiDB-lite"/>
    </source>
</evidence>
<gene>
    <name type="ordered locus">GWCH70_0020</name>
</gene>
<name>Y020_GEOSW</name>
<protein>
    <recommendedName>
        <fullName evidence="1">Nucleoid-associated protein GWCH70_0020</fullName>
    </recommendedName>
</protein>
<dbReference type="EMBL" id="CP001638">
    <property type="protein sequence ID" value="ACS22962.1"/>
    <property type="molecule type" value="Genomic_DNA"/>
</dbReference>
<dbReference type="SMR" id="C5D346"/>
<dbReference type="STRING" id="471223.GWCH70_0020"/>
<dbReference type="KEGG" id="gwc:GWCH70_0020"/>
<dbReference type="eggNOG" id="COG0718">
    <property type="taxonomic scope" value="Bacteria"/>
</dbReference>
<dbReference type="HOGENOM" id="CLU_140930_1_0_9"/>
<dbReference type="OrthoDB" id="9795263at2"/>
<dbReference type="GO" id="GO:0043590">
    <property type="term" value="C:bacterial nucleoid"/>
    <property type="evidence" value="ECO:0007669"/>
    <property type="project" value="UniProtKB-UniRule"/>
</dbReference>
<dbReference type="GO" id="GO:0005829">
    <property type="term" value="C:cytosol"/>
    <property type="evidence" value="ECO:0007669"/>
    <property type="project" value="TreeGrafter"/>
</dbReference>
<dbReference type="GO" id="GO:0003677">
    <property type="term" value="F:DNA binding"/>
    <property type="evidence" value="ECO:0007669"/>
    <property type="project" value="UniProtKB-UniRule"/>
</dbReference>
<dbReference type="FunFam" id="3.30.1310.10:FF:000002">
    <property type="entry name" value="Nucleoid-associated protein IKC_06587"/>
    <property type="match status" value="1"/>
</dbReference>
<dbReference type="Gene3D" id="3.30.1310.10">
    <property type="entry name" value="Nucleoid-associated protein YbaB-like domain"/>
    <property type="match status" value="1"/>
</dbReference>
<dbReference type="HAMAP" id="MF_00274">
    <property type="entry name" value="DNA_YbaB_EbfC"/>
    <property type="match status" value="1"/>
</dbReference>
<dbReference type="InterPro" id="IPR036894">
    <property type="entry name" value="YbaB-like_sf"/>
</dbReference>
<dbReference type="InterPro" id="IPR004401">
    <property type="entry name" value="YbaB/EbfC"/>
</dbReference>
<dbReference type="NCBIfam" id="TIGR00103">
    <property type="entry name" value="DNA_YbaB_EbfC"/>
    <property type="match status" value="1"/>
</dbReference>
<dbReference type="PANTHER" id="PTHR33449">
    <property type="entry name" value="NUCLEOID-ASSOCIATED PROTEIN YBAB"/>
    <property type="match status" value="1"/>
</dbReference>
<dbReference type="PANTHER" id="PTHR33449:SF1">
    <property type="entry name" value="NUCLEOID-ASSOCIATED PROTEIN YBAB"/>
    <property type="match status" value="1"/>
</dbReference>
<dbReference type="Pfam" id="PF02575">
    <property type="entry name" value="YbaB_DNA_bd"/>
    <property type="match status" value="1"/>
</dbReference>
<dbReference type="PIRSF" id="PIRSF004555">
    <property type="entry name" value="UCP004555"/>
    <property type="match status" value="1"/>
</dbReference>
<dbReference type="SUPFAM" id="SSF82607">
    <property type="entry name" value="YbaB-like"/>
    <property type="match status" value="1"/>
</dbReference>
<reference key="1">
    <citation type="submission" date="2009-06" db="EMBL/GenBank/DDBJ databases">
        <title>Complete sequence of chromosome of Geopacillus sp. WCH70.</title>
        <authorList>
            <consortium name="US DOE Joint Genome Institute"/>
            <person name="Lucas S."/>
            <person name="Copeland A."/>
            <person name="Lapidus A."/>
            <person name="Glavina del Rio T."/>
            <person name="Dalin E."/>
            <person name="Tice H."/>
            <person name="Bruce D."/>
            <person name="Goodwin L."/>
            <person name="Pitluck S."/>
            <person name="Chertkov O."/>
            <person name="Brettin T."/>
            <person name="Detter J.C."/>
            <person name="Han C."/>
            <person name="Larimer F."/>
            <person name="Land M."/>
            <person name="Hauser L."/>
            <person name="Kyrpides N."/>
            <person name="Mikhailova N."/>
            <person name="Brumm P."/>
            <person name="Mead D.A."/>
            <person name="Richardson P."/>
        </authorList>
    </citation>
    <scope>NUCLEOTIDE SEQUENCE [LARGE SCALE GENOMIC DNA]</scope>
    <source>
        <strain>WCH70</strain>
    </source>
</reference>
<accession>C5D346</accession>
<sequence>MMRGGMGNMQKMMKQMQKMQKEMQKAQEQLAEKTVEGTAGGGMVTVIANGHKQILEVKIKEEVVDPEDIEMLQDLVLAATNDALKKADELAAEMMGQFTKGLNIPGLF</sequence>
<proteinExistence type="inferred from homology"/>
<organism>
    <name type="scientific">Geobacillus sp. (strain WCH70)</name>
    <dbReference type="NCBI Taxonomy" id="471223"/>
    <lineage>
        <taxon>Bacteria</taxon>
        <taxon>Bacillati</taxon>
        <taxon>Bacillota</taxon>
        <taxon>Bacilli</taxon>
        <taxon>Bacillales</taxon>
        <taxon>Anoxybacillaceae</taxon>
        <taxon>Geobacillus</taxon>
    </lineage>
</organism>